<organismHost>
    <name type="scientific">Oryza latifolia</name>
    <dbReference type="NCBI Taxonomy" id="4534"/>
</organismHost>
<organismHost>
    <name type="scientific">Oryza nivara</name>
    <name type="common">Indian wild rice</name>
    <name type="synonym">Oryza sativa f. spontanea</name>
    <dbReference type="NCBI Taxonomy" id="4536"/>
</organismHost>
<organismHost>
    <name type="scientific">Oryza rufipogon</name>
    <name type="common">Brownbeard rice</name>
    <name type="synonym">Asian wild rice</name>
    <dbReference type="NCBI Taxonomy" id="4529"/>
</organismHost>
<dbReference type="EMBL" id="U66713">
    <property type="protein sequence ID" value="AAB63567.1"/>
    <property type="molecule type" value="Genomic_RNA"/>
</dbReference>
<dbReference type="RefSeq" id="NP_620540.1">
    <property type="nucleotide sequence ID" value="NC_003770.1"/>
</dbReference>
<dbReference type="GeneID" id="991203"/>
<dbReference type="KEGG" id="vg:991203"/>
<dbReference type="Proteomes" id="UP000000348">
    <property type="component" value="Genome"/>
</dbReference>
<dbReference type="GO" id="GO:0030430">
    <property type="term" value="C:host cell cytoplasm"/>
    <property type="evidence" value="ECO:0007669"/>
    <property type="project" value="UniProtKB-KW"/>
</dbReference>
<dbReference type="GO" id="GO:0044163">
    <property type="term" value="C:host cytoskeleton"/>
    <property type="evidence" value="ECO:0007669"/>
    <property type="project" value="UniProtKB-SubCell"/>
</dbReference>
<dbReference type="GO" id="GO:0039624">
    <property type="term" value="C:viral outer capsid"/>
    <property type="evidence" value="ECO:0007669"/>
    <property type="project" value="UniProtKB-KW"/>
</dbReference>
<comment type="function">
    <text evidence="1">Minor inner capsid component. Displays NTPase and RNA 5'-triphosphatase (RTPase) activities. May function as a cofactor of polymerase. Associates with microtubules and plays a role in the formation, structural organization and morphology of viral inclusions, where the assembly of cores and the replication of viral RNA occur (By similarity).</text>
</comment>
<comment type="subcellular location">
    <subcellularLocation>
        <location evidence="1">Virion</location>
    </subcellularLocation>
    <subcellularLocation>
        <location evidence="1">Host cytoplasm</location>
        <location evidence="1">Host cytoskeleton</location>
    </subcellularLocation>
</comment>
<feature type="chain" id="PRO_0000403638" description="Microtubule-associated protein VP7">
    <location>
        <begin position="1"/>
        <end position="608"/>
    </location>
</feature>
<reference key="1">
    <citation type="journal article" date="1997" name="Arch. Virol.">
        <title>Rice ragged stunt oryzavirus genome segments S7 and S10 encode non-structural proteins of M(r) 68,025 (Pns7) and M(r) 32,364 (Pns10).</title>
        <authorList>
            <person name="Upadhyaya N.M."/>
            <person name="Ramm K."/>
            <person name="Gellatly J.A."/>
            <person name="Li Z."/>
            <person name="Kositratana W."/>
            <person name="Waterhouse P.M."/>
        </authorList>
    </citation>
    <scope>NUCLEOTIDE SEQUENCE [GENOMIC RNA]</scope>
</reference>
<protein>
    <recommendedName>
        <fullName>Microtubule-associated protein VP7</fullName>
    </recommendedName>
</protein>
<organism>
    <name type="scientific">Rice ragged stunt virus (isolate Thailand)</name>
    <name type="common">RRSV</name>
    <dbReference type="NCBI Taxonomy" id="649603"/>
    <lineage>
        <taxon>Viruses</taxon>
        <taxon>Riboviria</taxon>
        <taxon>Orthornavirae</taxon>
        <taxon>Duplornaviricota</taxon>
        <taxon>Resentoviricetes</taxon>
        <taxon>Reovirales</taxon>
        <taxon>Spinareoviridae</taxon>
        <taxon>Oryzavirus</taxon>
        <taxon>Rice ragged stunt virus</taxon>
    </lineage>
</organism>
<accession>O41253</accession>
<name>VP7_RRSVT</name>
<keyword id="KW-0167">Capsid protein</keyword>
<keyword id="KW-1035">Host cytoplasm</keyword>
<keyword id="KW-1037">Host cytoskeleton</keyword>
<keyword id="KW-1152">Outer capsid protein</keyword>
<keyword id="KW-1185">Reference proteome</keyword>
<keyword id="KW-0946">Virion</keyword>
<proteinExistence type="inferred from homology"/>
<sequence length="608" mass="68026">MDELTLSIGGSPGKLAGTQLLYKQKIDKEIRLSPTDLLFSSNTVDHKLRNKRTTIALLSREVQARLGKWMISFADQKGTAADFGLQLAKWVQASTQLHYYVHPADMSALRAADQSLIRQLPRVTVEVCKTKKVSQTDPIEHKYQSRPGMIEGGVTITPRQAVTLEEIYPLASRPEKGVIMFMLSQAHLEHLIHPVIKQVSNYFTCVKVGTSGFSLNYNHPYIRAMFLEPITACDVVELPLQALHARFSAGKGHLYLCGDGHAPRTLTCAQMFDIPHVHDFTMPSVTVVSFYAPEQHIAIARYASWYEKDTICRLLQSTLPDVEKLVWLCAMSYPIFPSLRPTLTGSIFSRCKVVVSVSAERSRLLSDGLPKWAEWVDNVLSDRIAKPACLILIGPKASSKSFVTRQLVAKLNASSLSVEGDNFGRVDSDAFGKWVTMMVSNSTLPTSWAQFDLMQNDKEIASYVDIRFNDICVKHGFCELDDLRTKNAGVLQGEFARSFIEIIKDPSCGLRAFFSWLFSLYGLPRGLMLESHTNVEIAEYPPTTCILQLLPNYDVMSVLLERDARKGISKLAEMQMEEYYNGLRIGTYRSVLACELLRVAEVGPPVEG</sequence>
<evidence type="ECO:0000250" key="1"/>